<name>TOLR_ECOL6</name>
<organism>
    <name type="scientific">Escherichia coli O6:H1 (strain CFT073 / ATCC 700928 / UPEC)</name>
    <dbReference type="NCBI Taxonomy" id="199310"/>
    <lineage>
        <taxon>Bacteria</taxon>
        <taxon>Pseudomonadati</taxon>
        <taxon>Pseudomonadota</taxon>
        <taxon>Gammaproteobacteria</taxon>
        <taxon>Enterobacterales</taxon>
        <taxon>Enterobacteriaceae</taxon>
        <taxon>Escherichia</taxon>
    </lineage>
</organism>
<reference key="1">
    <citation type="journal article" date="2002" name="Proc. Natl. Acad. Sci. U.S.A.">
        <title>Extensive mosaic structure revealed by the complete genome sequence of uropathogenic Escherichia coli.</title>
        <authorList>
            <person name="Welch R.A."/>
            <person name="Burland V."/>
            <person name="Plunkett G. III"/>
            <person name="Redford P."/>
            <person name="Roesch P."/>
            <person name="Rasko D."/>
            <person name="Buckles E.L."/>
            <person name="Liou S.-R."/>
            <person name="Boutin A."/>
            <person name="Hackett J."/>
            <person name="Stroud D."/>
            <person name="Mayhew G.F."/>
            <person name="Rose D.J."/>
            <person name="Zhou S."/>
            <person name="Schwartz D.C."/>
            <person name="Perna N.T."/>
            <person name="Mobley H.L.T."/>
            <person name="Donnenberg M.S."/>
            <person name="Blattner F.R."/>
        </authorList>
    </citation>
    <scope>NUCLEOTIDE SEQUENCE [LARGE SCALE GENOMIC DNA]</scope>
    <source>
        <strain>CFT073 / ATCC 700928 / UPEC</strain>
    </source>
</reference>
<keyword id="KW-0131">Cell cycle</keyword>
<keyword id="KW-0132">Cell division</keyword>
<keyword id="KW-0997">Cell inner membrane</keyword>
<keyword id="KW-1003">Cell membrane</keyword>
<keyword id="KW-0472">Membrane</keyword>
<keyword id="KW-1185">Reference proteome</keyword>
<keyword id="KW-0812">Transmembrane</keyword>
<keyword id="KW-1133">Transmembrane helix</keyword>
<evidence type="ECO:0000255" key="1">
    <source>
        <dbReference type="HAMAP-Rule" id="MF_02203"/>
    </source>
</evidence>
<evidence type="ECO:0000305" key="2"/>
<dbReference type="EMBL" id="AE014075">
    <property type="protein sequence ID" value="AAN79290.1"/>
    <property type="molecule type" value="Genomic_DNA"/>
</dbReference>
<dbReference type="RefSeq" id="WP_000090097.1">
    <property type="nucleotide sequence ID" value="NZ_CP051263.1"/>
</dbReference>
<dbReference type="SMR" id="P0ABV7"/>
<dbReference type="STRING" id="199310.c0817"/>
<dbReference type="GeneID" id="93776746"/>
<dbReference type="KEGG" id="ecc:c0817"/>
<dbReference type="eggNOG" id="COG0848">
    <property type="taxonomic scope" value="Bacteria"/>
</dbReference>
<dbReference type="HOGENOM" id="CLU_085305_1_3_6"/>
<dbReference type="BioCyc" id="ECOL199310:C0817-MONOMER"/>
<dbReference type="Proteomes" id="UP000001410">
    <property type="component" value="Chromosome"/>
</dbReference>
<dbReference type="GO" id="GO:0005886">
    <property type="term" value="C:plasma membrane"/>
    <property type="evidence" value="ECO:0007669"/>
    <property type="project" value="UniProtKB-SubCell"/>
</dbReference>
<dbReference type="GO" id="GO:0022857">
    <property type="term" value="F:transmembrane transporter activity"/>
    <property type="evidence" value="ECO:0007669"/>
    <property type="project" value="InterPro"/>
</dbReference>
<dbReference type="GO" id="GO:0051301">
    <property type="term" value="P:cell division"/>
    <property type="evidence" value="ECO:0007669"/>
    <property type="project" value="UniProtKB-UniRule"/>
</dbReference>
<dbReference type="GO" id="GO:0015031">
    <property type="term" value="P:protein transport"/>
    <property type="evidence" value="ECO:0007669"/>
    <property type="project" value="InterPro"/>
</dbReference>
<dbReference type="FunFam" id="3.30.420.270:FF:000001">
    <property type="entry name" value="Tol-Pal system protein TolR"/>
    <property type="match status" value="1"/>
</dbReference>
<dbReference type="Gene3D" id="3.30.420.270">
    <property type="match status" value="1"/>
</dbReference>
<dbReference type="HAMAP" id="MF_02203">
    <property type="entry name" value="TolR"/>
    <property type="match status" value="1"/>
</dbReference>
<dbReference type="InterPro" id="IPR003400">
    <property type="entry name" value="ExbD"/>
</dbReference>
<dbReference type="InterPro" id="IPR014168">
    <property type="entry name" value="Tol-Pal_TolR"/>
</dbReference>
<dbReference type="NCBIfam" id="NF008248">
    <property type="entry name" value="PRK11024.1"/>
    <property type="match status" value="1"/>
</dbReference>
<dbReference type="NCBIfam" id="TIGR02801">
    <property type="entry name" value="tolR"/>
    <property type="match status" value="1"/>
</dbReference>
<dbReference type="PANTHER" id="PTHR30558">
    <property type="entry name" value="EXBD MEMBRANE COMPONENT OF PMF-DRIVEN MACROMOLECULE IMPORT SYSTEM"/>
    <property type="match status" value="1"/>
</dbReference>
<dbReference type="PANTHER" id="PTHR30558:SF7">
    <property type="entry name" value="TOL-PAL SYSTEM PROTEIN TOLR"/>
    <property type="match status" value="1"/>
</dbReference>
<dbReference type="Pfam" id="PF02472">
    <property type="entry name" value="ExbD"/>
    <property type="match status" value="1"/>
</dbReference>
<feature type="chain" id="PRO_0000129142" description="Tol-Pal system protein TolR">
    <location>
        <begin position="1"/>
        <end position="142"/>
    </location>
</feature>
<feature type="topological domain" description="Cytoplasmic" evidence="2">
    <location>
        <begin position="1"/>
        <end position="17"/>
    </location>
</feature>
<feature type="transmembrane region" description="Helical" evidence="1">
    <location>
        <begin position="18"/>
        <end position="38"/>
    </location>
</feature>
<feature type="topological domain" description="Periplasmic" evidence="2">
    <location>
        <begin position="39"/>
        <end position="142"/>
    </location>
</feature>
<protein>
    <recommendedName>
        <fullName evidence="1">Tol-Pal system protein TolR</fullName>
    </recommendedName>
</protein>
<comment type="function">
    <text evidence="1">Part of the Tol-Pal system, which plays a role in outer membrane invagination during cell division and is important for maintaining outer membrane integrity. Required, with TolQ, for the proton motive force-dependent activation of TolA and for TolA-Pal interaction.</text>
</comment>
<comment type="subunit">
    <text evidence="1">The Tol-Pal system is composed of five core proteins: the inner membrane proteins TolA, TolQ and TolR, the periplasmic protein TolB and the outer membrane protein Pal. They form a network linking the inner and outer membranes and the peptidoglycan layer.</text>
</comment>
<comment type="subcellular location">
    <subcellularLocation>
        <location evidence="1">Cell inner membrane</location>
        <topology evidence="1">Single-pass membrane protein</topology>
    </subcellularLocation>
</comment>
<comment type="similarity">
    <text evidence="1 2">Belongs to the ExbD/TolR family.</text>
</comment>
<accession>P0ABV7</accession>
<accession>P05829</accession>
<gene>
    <name evidence="1" type="primary">tolR</name>
    <name type="ordered locus">c0817</name>
</gene>
<sequence>MARARGRGRRDLKSEINIVPLLDVLLVLLLIFMATAPIITQSVEVDLPDATESQAVSSNDNPPVIVEVSGIGQYTVVVEKDRLERLPPEQVVAEVSSRFKANPKTVFLIGGAKDVPYDEIIKALNLLHSAGVKSVGLMTQPI</sequence>
<proteinExistence type="inferred from homology"/>